<evidence type="ECO:0000250" key="1"/>
<evidence type="ECO:0000255" key="2">
    <source>
        <dbReference type="PROSITE-ProRule" id="PRU00274"/>
    </source>
</evidence>
<evidence type="ECO:0000269" key="3">
    <source>
    </source>
</evidence>
<evidence type="ECO:0000305" key="4"/>
<keyword id="KW-1015">Disulfide bond</keyword>
<keyword id="KW-0378">Hydrolase</keyword>
<keyword id="KW-0645">Protease</keyword>
<keyword id="KW-1185">Reference proteome</keyword>
<keyword id="KW-0964">Secreted</keyword>
<keyword id="KW-0720">Serine protease</keyword>
<keyword id="KW-0732">Signal</keyword>
<keyword id="KW-0865">Zymogen</keyword>
<protein>
    <recommendedName>
        <fullName>Trypsin alpha</fullName>
        <ecNumber>3.4.21.4</ecNumber>
    </recommendedName>
</protein>
<feature type="signal peptide" evidence="4">
    <location>
        <begin position="1"/>
        <end position="22"/>
    </location>
</feature>
<feature type="propeptide" id="PRO_0000028261" description="Activation peptide">
    <location>
        <begin position="23"/>
        <end position="30"/>
    </location>
</feature>
<feature type="chain" id="PRO_0000028262" description="Trypsin alpha">
    <location>
        <begin position="31"/>
        <end position="256"/>
    </location>
</feature>
<feature type="domain" description="Peptidase S1" evidence="2">
    <location>
        <begin position="31"/>
        <end position="254"/>
    </location>
</feature>
<feature type="active site" description="Charge relay system" evidence="1">
    <location>
        <position position="71"/>
    </location>
</feature>
<feature type="active site" description="Charge relay system" evidence="1">
    <location>
        <position position="116"/>
    </location>
</feature>
<feature type="active site" description="Charge relay system" evidence="1">
    <location>
        <position position="210"/>
    </location>
</feature>
<feature type="site" description="Required for specificity" evidence="1">
    <location>
        <position position="204"/>
    </location>
</feature>
<feature type="disulfide bond" evidence="2">
    <location>
        <begin position="56"/>
        <end position="72"/>
    </location>
</feature>
<feature type="disulfide bond" evidence="2">
    <location>
        <begin position="180"/>
        <end position="197"/>
    </location>
</feature>
<feature type="disulfide bond" evidence="2">
    <location>
        <begin position="206"/>
        <end position="230"/>
    </location>
</feature>
<accession>P04814</accession>
<accession>Q541G0</accession>
<accession>Q9V5Y2</accession>
<dbReference type="EC" id="3.4.21.4"/>
<dbReference type="EMBL" id="X02989">
    <property type="protein sequence ID" value="CAA26732.1"/>
    <property type="molecule type" value="Genomic_DNA"/>
</dbReference>
<dbReference type="EMBL" id="M96372">
    <property type="protein sequence ID" value="AAA28982.1"/>
    <property type="molecule type" value="Genomic_DNA"/>
</dbReference>
<dbReference type="EMBL" id="U04853">
    <property type="protein sequence ID" value="AAA17453.1"/>
    <property type="molecule type" value="Genomic_DNA"/>
</dbReference>
<dbReference type="EMBL" id="AE013599">
    <property type="protein sequence ID" value="AAF58659.1"/>
    <property type="molecule type" value="Genomic_DNA"/>
</dbReference>
<dbReference type="EMBL" id="AY071341">
    <property type="protein sequence ID" value="AAL48963.1"/>
    <property type="molecule type" value="mRNA"/>
</dbReference>
<dbReference type="PIR" id="A23493">
    <property type="entry name" value="TRFF"/>
</dbReference>
<dbReference type="RefSeq" id="NP_476771.1">
    <property type="nucleotide sequence ID" value="NM_057423.4"/>
</dbReference>
<dbReference type="SMR" id="P04814"/>
<dbReference type="BioGRID" id="71314">
    <property type="interactions" value="7"/>
</dbReference>
<dbReference type="DIP" id="DIP-20031N"/>
<dbReference type="FunCoup" id="P04814">
    <property type="interactions" value="68"/>
</dbReference>
<dbReference type="IntAct" id="P04814">
    <property type="interactions" value="13"/>
</dbReference>
<dbReference type="STRING" id="7227.FBpp0087257"/>
<dbReference type="MEROPS" id="S01.110"/>
<dbReference type="PaxDb" id="7227-FBpp0087257"/>
<dbReference type="DNASU" id="48316"/>
<dbReference type="EnsemblMetazoa" id="FBtr0088161">
    <property type="protein sequence ID" value="FBpp0087257"/>
    <property type="gene ID" value="FBgn0003863"/>
</dbReference>
<dbReference type="GeneID" id="48316"/>
<dbReference type="KEGG" id="dme:Dmel_CG18444"/>
<dbReference type="UCSC" id="CG18444-RA">
    <property type="organism name" value="d. melanogaster"/>
</dbReference>
<dbReference type="AGR" id="FB:FBgn0003863"/>
<dbReference type="CTD" id="48316"/>
<dbReference type="FlyBase" id="FBgn0003863">
    <property type="gene designation" value="alphaTry"/>
</dbReference>
<dbReference type="VEuPathDB" id="VectorBase:FBgn0003863"/>
<dbReference type="eggNOG" id="KOG3627">
    <property type="taxonomic scope" value="Eukaryota"/>
</dbReference>
<dbReference type="GeneTree" id="ENSGT00940000164166"/>
<dbReference type="HOGENOM" id="CLU_006842_7_1_1"/>
<dbReference type="InParanoid" id="P04814"/>
<dbReference type="OMA" id="SQIRNTM"/>
<dbReference type="OrthoDB" id="10059102at2759"/>
<dbReference type="PhylomeDB" id="P04814"/>
<dbReference type="BioGRID-ORCS" id="48316">
    <property type="hits" value="0 hits in 1 CRISPR screen"/>
</dbReference>
<dbReference type="GenomeRNAi" id="48316"/>
<dbReference type="PRO" id="PR:P04814"/>
<dbReference type="Proteomes" id="UP000000803">
    <property type="component" value="Chromosome 2R"/>
</dbReference>
<dbReference type="Bgee" id="FBgn0003863">
    <property type="expression patterns" value="Expressed in enterocyte of anterior adult midgut epithelium in digestive tract and 91 other cell types or tissues"/>
</dbReference>
<dbReference type="GO" id="GO:0005576">
    <property type="term" value="C:extracellular region"/>
    <property type="evidence" value="ECO:0007669"/>
    <property type="project" value="UniProtKB-SubCell"/>
</dbReference>
<dbReference type="GO" id="GO:0017171">
    <property type="term" value="F:serine hydrolase activity"/>
    <property type="evidence" value="ECO:0007005"/>
    <property type="project" value="FlyBase"/>
</dbReference>
<dbReference type="GO" id="GO:0004252">
    <property type="term" value="F:serine-type endopeptidase activity"/>
    <property type="evidence" value="ECO:0000255"/>
    <property type="project" value="FlyBase"/>
</dbReference>
<dbReference type="GO" id="GO:0006508">
    <property type="term" value="P:proteolysis"/>
    <property type="evidence" value="ECO:0000255"/>
    <property type="project" value="FlyBase"/>
</dbReference>
<dbReference type="CDD" id="cd00190">
    <property type="entry name" value="Tryp_SPc"/>
    <property type="match status" value="1"/>
</dbReference>
<dbReference type="FunFam" id="2.40.10.10:FF:000077">
    <property type="entry name" value="Predicted protein"/>
    <property type="match status" value="1"/>
</dbReference>
<dbReference type="Gene3D" id="2.40.10.10">
    <property type="entry name" value="Trypsin-like serine proteases"/>
    <property type="match status" value="2"/>
</dbReference>
<dbReference type="InterPro" id="IPR050430">
    <property type="entry name" value="Peptidase_S1"/>
</dbReference>
<dbReference type="InterPro" id="IPR009003">
    <property type="entry name" value="Peptidase_S1_PA"/>
</dbReference>
<dbReference type="InterPro" id="IPR043504">
    <property type="entry name" value="Peptidase_S1_PA_chymotrypsin"/>
</dbReference>
<dbReference type="InterPro" id="IPR001314">
    <property type="entry name" value="Peptidase_S1A"/>
</dbReference>
<dbReference type="InterPro" id="IPR001254">
    <property type="entry name" value="Trypsin_dom"/>
</dbReference>
<dbReference type="InterPro" id="IPR018114">
    <property type="entry name" value="TRYPSIN_HIS"/>
</dbReference>
<dbReference type="InterPro" id="IPR033116">
    <property type="entry name" value="TRYPSIN_SER"/>
</dbReference>
<dbReference type="PANTHER" id="PTHR24276:SF91">
    <property type="entry name" value="AT26814P-RELATED"/>
    <property type="match status" value="1"/>
</dbReference>
<dbReference type="PANTHER" id="PTHR24276">
    <property type="entry name" value="POLYSERASE-RELATED"/>
    <property type="match status" value="1"/>
</dbReference>
<dbReference type="Pfam" id="PF00089">
    <property type="entry name" value="Trypsin"/>
    <property type="match status" value="1"/>
</dbReference>
<dbReference type="PRINTS" id="PR00722">
    <property type="entry name" value="CHYMOTRYPSIN"/>
</dbReference>
<dbReference type="SMART" id="SM00020">
    <property type="entry name" value="Tryp_SPc"/>
    <property type="match status" value="1"/>
</dbReference>
<dbReference type="SUPFAM" id="SSF50494">
    <property type="entry name" value="Trypsin-like serine proteases"/>
    <property type="match status" value="1"/>
</dbReference>
<dbReference type="PROSITE" id="PS50240">
    <property type="entry name" value="TRYPSIN_DOM"/>
    <property type="match status" value="1"/>
</dbReference>
<dbReference type="PROSITE" id="PS00134">
    <property type="entry name" value="TRYPSIN_HIS"/>
    <property type="match status" value="1"/>
</dbReference>
<dbReference type="PROSITE" id="PS00135">
    <property type="entry name" value="TRYPSIN_SER"/>
    <property type="match status" value="1"/>
</dbReference>
<proteinExistence type="evidence at transcript level"/>
<sequence>MLKIVILLSAVVCALGGTVPEGLLPQLDGRIVGGSATTISSFPWQISLQRSGSHSCGGSIYSANIIVTAAHCLQSVSASVLQVRAGSTYWSSGGVVAKVSSFKNHEGYNANTMVNDIAVIRLSSSLSFSSSIKAISLATYNPANGASAAVSGWGTQSSGSSSIPSQLQYVNVNIVSQSQCASSTYGYGSQIRNTMICAAASGKDACQGDSGGPLVSGGVLVGVVSWGYGCAYSNYPGVYADVAVLRSWVVSTANSI</sequence>
<gene>
    <name type="primary">alphaTry</name>
    <name type="synonym">TRY-ALPHA</name>
    <name type="ORF">CG18444</name>
</gene>
<name>TRYA_DROME</name>
<comment type="catalytic activity">
    <reaction>
        <text>Preferential cleavage: Arg-|-Xaa, Lys-|-Xaa.</text>
        <dbReference type="EC" id="3.4.21.4"/>
    </reaction>
</comment>
<comment type="subcellular location">
    <subcellularLocation>
        <location evidence="3">Secreted</location>
        <location evidence="3">Extracellular space</location>
    </subcellularLocation>
</comment>
<comment type="tissue specificity">
    <text evidence="3">Synthesized in the midgut of both larvae and adults, primarily in the ventriculus and gastric caeca.</text>
</comment>
<comment type="similarity">
    <text evidence="2">Belongs to the peptidase S1 family.</text>
</comment>
<organism>
    <name type="scientific">Drosophila melanogaster</name>
    <name type="common">Fruit fly</name>
    <dbReference type="NCBI Taxonomy" id="7227"/>
    <lineage>
        <taxon>Eukaryota</taxon>
        <taxon>Metazoa</taxon>
        <taxon>Ecdysozoa</taxon>
        <taxon>Arthropoda</taxon>
        <taxon>Hexapoda</taxon>
        <taxon>Insecta</taxon>
        <taxon>Pterygota</taxon>
        <taxon>Neoptera</taxon>
        <taxon>Endopterygota</taxon>
        <taxon>Diptera</taxon>
        <taxon>Brachycera</taxon>
        <taxon>Muscomorpha</taxon>
        <taxon>Ephydroidea</taxon>
        <taxon>Drosophilidae</taxon>
        <taxon>Drosophila</taxon>
        <taxon>Sophophora</taxon>
    </lineage>
</organism>
<reference key="1">
    <citation type="journal article" date="1985" name="Nucleic Acids Res.">
        <title>A gene family in Drosophila melanogaster coding for trypsin-like enzymes.</title>
        <authorList>
            <person name="Davis C.A."/>
            <person name="Riddell D.C."/>
            <person name="Higgins M.J."/>
            <person name="Holden J.J.A."/>
            <person name="White B.N."/>
        </authorList>
    </citation>
    <scope>NUCLEOTIDE SEQUENCE [GENOMIC DNA]</scope>
    <scope>SUBCELLULAR LOCATION</scope>
    <scope>TISSUE SPECIFICITY</scope>
</reference>
<reference key="2">
    <citation type="journal article" date="1999" name="Mol. Biol. Evol.">
        <title>Concerted evolution within a trypsin gene cluster in Drosophila.</title>
        <authorList>
            <person name="Wang S."/>
            <person name="Magoulas C."/>
            <person name="Hickey D.A."/>
        </authorList>
    </citation>
    <scope>NUCLEOTIDE SEQUENCE [GENOMIC DNA]</scope>
</reference>
<reference key="3">
    <citation type="submission" date="1994-01" db="EMBL/GenBank/DDBJ databases">
        <authorList>
            <person name="Wang S."/>
            <person name="Magoulas C."/>
            <person name="Hickey D.A."/>
        </authorList>
    </citation>
    <scope>NUCLEOTIDE SEQUENCE [GENOMIC DNA]</scope>
    <source>
        <strain>Oregon-R</strain>
    </source>
</reference>
<reference key="4">
    <citation type="journal article" date="2000" name="Science">
        <title>The genome sequence of Drosophila melanogaster.</title>
        <authorList>
            <person name="Adams M.D."/>
            <person name="Celniker S.E."/>
            <person name="Holt R.A."/>
            <person name="Evans C.A."/>
            <person name="Gocayne J.D."/>
            <person name="Amanatides P.G."/>
            <person name="Scherer S.E."/>
            <person name="Li P.W."/>
            <person name="Hoskins R.A."/>
            <person name="Galle R.F."/>
            <person name="George R.A."/>
            <person name="Lewis S.E."/>
            <person name="Richards S."/>
            <person name="Ashburner M."/>
            <person name="Henderson S.N."/>
            <person name="Sutton G.G."/>
            <person name="Wortman J.R."/>
            <person name="Yandell M.D."/>
            <person name="Zhang Q."/>
            <person name="Chen L.X."/>
            <person name="Brandon R.C."/>
            <person name="Rogers Y.-H.C."/>
            <person name="Blazej R.G."/>
            <person name="Champe M."/>
            <person name="Pfeiffer B.D."/>
            <person name="Wan K.H."/>
            <person name="Doyle C."/>
            <person name="Baxter E.G."/>
            <person name="Helt G."/>
            <person name="Nelson C.R."/>
            <person name="Miklos G.L.G."/>
            <person name="Abril J.F."/>
            <person name="Agbayani A."/>
            <person name="An H.-J."/>
            <person name="Andrews-Pfannkoch C."/>
            <person name="Baldwin D."/>
            <person name="Ballew R.M."/>
            <person name="Basu A."/>
            <person name="Baxendale J."/>
            <person name="Bayraktaroglu L."/>
            <person name="Beasley E.M."/>
            <person name="Beeson K.Y."/>
            <person name="Benos P.V."/>
            <person name="Berman B.P."/>
            <person name="Bhandari D."/>
            <person name="Bolshakov S."/>
            <person name="Borkova D."/>
            <person name="Botchan M.R."/>
            <person name="Bouck J."/>
            <person name="Brokstein P."/>
            <person name="Brottier P."/>
            <person name="Burtis K.C."/>
            <person name="Busam D.A."/>
            <person name="Butler H."/>
            <person name="Cadieu E."/>
            <person name="Center A."/>
            <person name="Chandra I."/>
            <person name="Cherry J.M."/>
            <person name="Cawley S."/>
            <person name="Dahlke C."/>
            <person name="Davenport L.B."/>
            <person name="Davies P."/>
            <person name="de Pablos B."/>
            <person name="Delcher A."/>
            <person name="Deng Z."/>
            <person name="Mays A.D."/>
            <person name="Dew I."/>
            <person name="Dietz S.M."/>
            <person name="Dodson K."/>
            <person name="Doup L.E."/>
            <person name="Downes M."/>
            <person name="Dugan-Rocha S."/>
            <person name="Dunkov B.C."/>
            <person name="Dunn P."/>
            <person name="Durbin K.J."/>
            <person name="Evangelista C.C."/>
            <person name="Ferraz C."/>
            <person name="Ferriera S."/>
            <person name="Fleischmann W."/>
            <person name="Fosler C."/>
            <person name="Gabrielian A.E."/>
            <person name="Garg N.S."/>
            <person name="Gelbart W.M."/>
            <person name="Glasser K."/>
            <person name="Glodek A."/>
            <person name="Gong F."/>
            <person name="Gorrell J.H."/>
            <person name="Gu Z."/>
            <person name="Guan P."/>
            <person name="Harris M."/>
            <person name="Harris N.L."/>
            <person name="Harvey D.A."/>
            <person name="Heiman T.J."/>
            <person name="Hernandez J.R."/>
            <person name="Houck J."/>
            <person name="Hostin D."/>
            <person name="Houston K.A."/>
            <person name="Howland T.J."/>
            <person name="Wei M.-H."/>
            <person name="Ibegwam C."/>
            <person name="Jalali M."/>
            <person name="Kalush F."/>
            <person name="Karpen G.H."/>
            <person name="Ke Z."/>
            <person name="Kennison J.A."/>
            <person name="Ketchum K.A."/>
            <person name="Kimmel B.E."/>
            <person name="Kodira C.D."/>
            <person name="Kraft C.L."/>
            <person name="Kravitz S."/>
            <person name="Kulp D."/>
            <person name="Lai Z."/>
            <person name="Lasko P."/>
            <person name="Lei Y."/>
            <person name="Levitsky A.A."/>
            <person name="Li J.H."/>
            <person name="Li Z."/>
            <person name="Liang Y."/>
            <person name="Lin X."/>
            <person name="Liu X."/>
            <person name="Mattei B."/>
            <person name="McIntosh T.C."/>
            <person name="McLeod M.P."/>
            <person name="McPherson D."/>
            <person name="Merkulov G."/>
            <person name="Milshina N.V."/>
            <person name="Mobarry C."/>
            <person name="Morris J."/>
            <person name="Moshrefi A."/>
            <person name="Mount S.M."/>
            <person name="Moy M."/>
            <person name="Murphy B."/>
            <person name="Murphy L."/>
            <person name="Muzny D.M."/>
            <person name="Nelson D.L."/>
            <person name="Nelson D.R."/>
            <person name="Nelson K.A."/>
            <person name="Nixon K."/>
            <person name="Nusskern D.R."/>
            <person name="Pacleb J.M."/>
            <person name="Palazzolo M."/>
            <person name="Pittman G.S."/>
            <person name="Pan S."/>
            <person name="Pollard J."/>
            <person name="Puri V."/>
            <person name="Reese M.G."/>
            <person name="Reinert K."/>
            <person name="Remington K."/>
            <person name="Saunders R.D.C."/>
            <person name="Scheeler F."/>
            <person name="Shen H."/>
            <person name="Shue B.C."/>
            <person name="Siden-Kiamos I."/>
            <person name="Simpson M."/>
            <person name="Skupski M.P."/>
            <person name="Smith T.J."/>
            <person name="Spier E."/>
            <person name="Spradling A.C."/>
            <person name="Stapleton M."/>
            <person name="Strong R."/>
            <person name="Sun E."/>
            <person name="Svirskas R."/>
            <person name="Tector C."/>
            <person name="Turner R."/>
            <person name="Venter E."/>
            <person name="Wang A.H."/>
            <person name="Wang X."/>
            <person name="Wang Z.-Y."/>
            <person name="Wassarman D.A."/>
            <person name="Weinstock G.M."/>
            <person name="Weissenbach J."/>
            <person name="Williams S.M."/>
            <person name="Woodage T."/>
            <person name="Worley K.C."/>
            <person name="Wu D."/>
            <person name="Yang S."/>
            <person name="Yao Q.A."/>
            <person name="Ye J."/>
            <person name="Yeh R.-F."/>
            <person name="Zaveri J.S."/>
            <person name="Zhan M."/>
            <person name="Zhang G."/>
            <person name="Zhao Q."/>
            <person name="Zheng L."/>
            <person name="Zheng X.H."/>
            <person name="Zhong F.N."/>
            <person name="Zhong W."/>
            <person name="Zhou X."/>
            <person name="Zhu S.C."/>
            <person name="Zhu X."/>
            <person name="Smith H.O."/>
            <person name="Gibbs R.A."/>
            <person name="Myers E.W."/>
            <person name="Rubin G.M."/>
            <person name="Venter J.C."/>
        </authorList>
    </citation>
    <scope>NUCLEOTIDE SEQUENCE [LARGE SCALE GENOMIC DNA]</scope>
    <source>
        <strain>Berkeley</strain>
    </source>
</reference>
<reference key="5">
    <citation type="journal article" date="2002" name="Genome Biol.">
        <title>Annotation of the Drosophila melanogaster euchromatic genome: a systematic review.</title>
        <authorList>
            <person name="Misra S."/>
            <person name="Crosby M.A."/>
            <person name="Mungall C.J."/>
            <person name="Matthews B.B."/>
            <person name="Campbell K.S."/>
            <person name="Hradecky P."/>
            <person name="Huang Y."/>
            <person name="Kaminker J.S."/>
            <person name="Millburn G.H."/>
            <person name="Prochnik S.E."/>
            <person name="Smith C.D."/>
            <person name="Tupy J.L."/>
            <person name="Whitfield E.J."/>
            <person name="Bayraktaroglu L."/>
            <person name="Berman B.P."/>
            <person name="Bettencourt B.R."/>
            <person name="Celniker S.E."/>
            <person name="de Grey A.D.N.J."/>
            <person name="Drysdale R.A."/>
            <person name="Harris N.L."/>
            <person name="Richter J."/>
            <person name="Russo S."/>
            <person name="Schroeder A.J."/>
            <person name="Shu S.Q."/>
            <person name="Stapleton M."/>
            <person name="Yamada C."/>
            <person name="Ashburner M."/>
            <person name="Gelbart W.M."/>
            <person name="Rubin G.M."/>
            <person name="Lewis S.E."/>
        </authorList>
    </citation>
    <scope>GENOME REANNOTATION</scope>
    <source>
        <strain>Berkeley</strain>
    </source>
</reference>
<reference key="6">
    <citation type="submission" date="2003-12" db="EMBL/GenBank/DDBJ databases">
        <authorList>
            <person name="Stapleton M."/>
            <person name="Brokstein P."/>
            <person name="Hong L."/>
            <person name="Agbayani A."/>
            <person name="Carlson J.W."/>
            <person name="Champe M."/>
            <person name="Chavez C."/>
            <person name="Dorsett V."/>
            <person name="Dresnek D."/>
            <person name="Farfan D."/>
            <person name="Frise E."/>
            <person name="George R.A."/>
            <person name="Gonzalez M."/>
            <person name="Guarin H."/>
            <person name="Kronmiller B."/>
            <person name="Li P.W."/>
            <person name="Liao G."/>
            <person name="Miranda A."/>
            <person name="Mungall C.J."/>
            <person name="Nunoo J."/>
            <person name="Pacleb J.M."/>
            <person name="Paragas V."/>
            <person name="Park S."/>
            <person name="Patel S."/>
            <person name="Phouanenavong S."/>
            <person name="Wan K.H."/>
            <person name="Yu C."/>
            <person name="Lewis S.E."/>
            <person name="Rubin G.M."/>
            <person name="Celniker S.E."/>
        </authorList>
    </citation>
    <scope>NUCLEOTIDE SEQUENCE [LARGE SCALE MRNA]</scope>
    <source>
        <strain>Berkeley</strain>
        <tissue>Embryo</tissue>
    </source>
</reference>